<feature type="initiator methionine" description="Removed" evidence="2">
    <location>
        <position position="1"/>
    </location>
</feature>
<feature type="chain" id="PRO_0000191747" description="DNA polymerase epsilon subunit 4">
    <location>
        <begin position="2"/>
        <end position="118"/>
    </location>
</feature>
<feature type="region of interest" description="Disordered" evidence="3">
    <location>
        <begin position="1"/>
        <end position="37"/>
    </location>
</feature>
<feature type="compositionally biased region" description="Low complexity" evidence="3">
    <location>
        <begin position="1"/>
        <end position="11"/>
    </location>
</feature>
<feature type="compositionally biased region" description="Low complexity" evidence="3">
    <location>
        <begin position="19"/>
        <end position="35"/>
    </location>
</feature>
<feature type="modified residue" description="N-acetylalanine" evidence="2">
    <location>
        <position position="2"/>
    </location>
</feature>
<feature type="modified residue" description="Phosphothreonine" evidence="2">
    <location>
        <position position="11"/>
    </location>
</feature>
<feature type="modified residue" description="Phosphoserine" evidence="2">
    <location>
        <position position="25"/>
    </location>
</feature>
<proteinExistence type="evidence at protein level"/>
<gene>
    <name type="primary">Pole4</name>
</gene>
<dbReference type="EMBL" id="AK010135">
    <property type="protein sequence ID" value="BAB26722.1"/>
    <property type="molecule type" value="mRNA"/>
</dbReference>
<dbReference type="EMBL" id="AK010300">
    <property type="protein sequence ID" value="BAB26833.1"/>
    <property type="molecule type" value="mRNA"/>
</dbReference>
<dbReference type="EMBL" id="AK011595">
    <property type="protein sequence ID" value="BAB27723.1"/>
    <property type="molecule type" value="mRNA"/>
</dbReference>
<dbReference type="EMBL" id="AK160582">
    <property type="protein sequence ID" value="BAE35889.1"/>
    <property type="molecule type" value="mRNA"/>
</dbReference>
<dbReference type="EMBL" id="AK167631">
    <property type="protein sequence ID" value="BAE39682.1"/>
    <property type="molecule type" value="mRNA"/>
</dbReference>
<dbReference type="EMBL" id="BC023189">
    <property type="protein sequence ID" value="AAH23189.1"/>
    <property type="molecule type" value="mRNA"/>
</dbReference>
<dbReference type="CCDS" id="CCDS39524.1"/>
<dbReference type="RefSeq" id="NP_080158.1">
    <property type="nucleotide sequence ID" value="NM_025882.3"/>
</dbReference>
<dbReference type="SMR" id="Q9CQ36"/>
<dbReference type="ComplexPortal" id="CPX-2109">
    <property type="entry name" value="DNA polymerase epsilon complex"/>
</dbReference>
<dbReference type="FunCoup" id="Q9CQ36">
    <property type="interactions" value="1785"/>
</dbReference>
<dbReference type="STRING" id="10090.ENSMUSP00000093462"/>
<dbReference type="GlyGen" id="Q9CQ36">
    <property type="glycosylation" value="1 site, 1 O-linked glycan (1 site)"/>
</dbReference>
<dbReference type="iPTMnet" id="Q9CQ36"/>
<dbReference type="PhosphoSitePlus" id="Q9CQ36"/>
<dbReference type="REPRODUCTION-2DPAGE" id="Q9CQ36"/>
<dbReference type="PaxDb" id="10090-ENSMUSP00000093462"/>
<dbReference type="ProteomicsDB" id="277489"/>
<dbReference type="Pumba" id="Q9CQ36"/>
<dbReference type="Antibodypedia" id="31631">
    <property type="antibodies" value="78 antibodies from 17 providers"/>
</dbReference>
<dbReference type="DNASU" id="66979"/>
<dbReference type="Ensembl" id="ENSMUST00000095786.6">
    <property type="protein sequence ID" value="ENSMUSP00000093462.6"/>
    <property type="gene ID" value="ENSMUSG00000030042.16"/>
</dbReference>
<dbReference type="GeneID" id="66979"/>
<dbReference type="KEGG" id="mmu:66979"/>
<dbReference type="UCSC" id="uc009clk.1">
    <property type="organism name" value="mouse"/>
</dbReference>
<dbReference type="AGR" id="MGI:1914229"/>
<dbReference type="CTD" id="56655"/>
<dbReference type="MGI" id="MGI:1914229">
    <property type="gene designation" value="Pole4"/>
</dbReference>
<dbReference type="VEuPathDB" id="HostDB:ENSMUSG00000030042"/>
<dbReference type="eggNOG" id="KOG1658">
    <property type="taxonomic scope" value="Eukaryota"/>
</dbReference>
<dbReference type="GeneTree" id="ENSGT00940000160888"/>
<dbReference type="HOGENOM" id="CLU_045277_8_0_1"/>
<dbReference type="InParanoid" id="Q9CQ36"/>
<dbReference type="OMA" id="CYAFLEG"/>
<dbReference type="PhylomeDB" id="Q9CQ36"/>
<dbReference type="TreeFam" id="TF103009"/>
<dbReference type="Reactome" id="R-MMU-110314">
    <property type="pathway name" value="Recognition of DNA damage by PCNA-containing replication complex"/>
</dbReference>
<dbReference type="Reactome" id="R-MMU-5651801">
    <property type="pathway name" value="PCNA-Dependent Long Patch Base Excision Repair"/>
</dbReference>
<dbReference type="Reactome" id="R-MMU-5656169">
    <property type="pathway name" value="Termination of translesion DNA synthesis"/>
</dbReference>
<dbReference type="Reactome" id="R-MMU-5685942">
    <property type="pathway name" value="HDR through Homologous Recombination (HRR)"/>
</dbReference>
<dbReference type="Reactome" id="R-MMU-5696397">
    <property type="pathway name" value="Gap-filling DNA repair synthesis and ligation in GG-NER"/>
</dbReference>
<dbReference type="Reactome" id="R-MMU-5696400">
    <property type="pathway name" value="Dual Incision in GG-NER"/>
</dbReference>
<dbReference type="Reactome" id="R-MMU-6782135">
    <property type="pathway name" value="Dual incision in TC-NER"/>
</dbReference>
<dbReference type="Reactome" id="R-MMU-6782210">
    <property type="pathway name" value="Gap-filling DNA repair synthesis and ligation in TC-NER"/>
</dbReference>
<dbReference type="Reactome" id="R-MMU-68952">
    <property type="pathway name" value="DNA replication initiation"/>
</dbReference>
<dbReference type="Reactome" id="R-MMU-68962">
    <property type="pathway name" value="Activation of the pre-replicative complex"/>
</dbReference>
<dbReference type="BioGRID-ORCS" id="66979">
    <property type="hits" value="5 hits in 113 CRISPR screens"/>
</dbReference>
<dbReference type="ChiTaRS" id="Pole4">
    <property type="organism name" value="mouse"/>
</dbReference>
<dbReference type="PRO" id="PR:Q9CQ36"/>
<dbReference type="Proteomes" id="UP000000589">
    <property type="component" value="Chromosome 6"/>
</dbReference>
<dbReference type="RNAct" id="Q9CQ36">
    <property type="molecule type" value="protein"/>
</dbReference>
<dbReference type="Bgee" id="ENSMUSG00000030042">
    <property type="expression patterns" value="Expressed in animal zygote and 277 other cell types or tissues"/>
</dbReference>
<dbReference type="ExpressionAtlas" id="Q9CQ36">
    <property type="expression patterns" value="baseline and differential"/>
</dbReference>
<dbReference type="GO" id="GO:0008622">
    <property type="term" value="C:epsilon DNA polymerase complex"/>
    <property type="evidence" value="ECO:0000250"/>
    <property type="project" value="UniProtKB"/>
</dbReference>
<dbReference type="GO" id="GO:0003677">
    <property type="term" value="F:DNA binding"/>
    <property type="evidence" value="ECO:0007669"/>
    <property type="project" value="UniProtKB-KW"/>
</dbReference>
<dbReference type="GO" id="GO:0046982">
    <property type="term" value="F:protein heterodimerization activity"/>
    <property type="evidence" value="ECO:0007669"/>
    <property type="project" value="InterPro"/>
</dbReference>
<dbReference type="GO" id="GO:0006261">
    <property type="term" value="P:DNA-templated DNA replication"/>
    <property type="evidence" value="ECO:0000266"/>
    <property type="project" value="ComplexPortal"/>
</dbReference>
<dbReference type="CDD" id="cd22929">
    <property type="entry name" value="HFD_POLE4-like"/>
    <property type="match status" value="1"/>
</dbReference>
<dbReference type="FunFam" id="1.10.20.10:FF:000051">
    <property type="entry name" value="DNA polymerase epsilon 4, accessory subunit"/>
    <property type="match status" value="1"/>
</dbReference>
<dbReference type="Gene3D" id="1.10.20.10">
    <property type="entry name" value="Histone, subunit A"/>
    <property type="match status" value="1"/>
</dbReference>
<dbReference type="InterPro" id="IPR003958">
    <property type="entry name" value="CBFA_NFYB_domain"/>
</dbReference>
<dbReference type="InterPro" id="IPR009072">
    <property type="entry name" value="Histone-fold"/>
</dbReference>
<dbReference type="InterPro" id="IPR050568">
    <property type="entry name" value="Transcr_DNA_Rep_Reg"/>
</dbReference>
<dbReference type="PANTHER" id="PTHR10252:SF79">
    <property type="entry name" value="DNA POLYMERASE EPSILON SUBUNIT 4"/>
    <property type="match status" value="1"/>
</dbReference>
<dbReference type="PANTHER" id="PTHR10252">
    <property type="entry name" value="HISTONE-LIKE TRANSCRIPTION FACTOR CCAAT-RELATED"/>
    <property type="match status" value="1"/>
</dbReference>
<dbReference type="Pfam" id="PF00808">
    <property type="entry name" value="CBFD_NFYB_HMF"/>
    <property type="match status" value="1"/>
</dbReference>
<dbReference type="SUPFAM" id="SSF47113">
    <property type="entry name" value="Histone-fold"/>
    <property type="match status" value="1"/>
</dbReference>
<comment type="function">
    <text evidence="1 2">Accessory component of the DNA polymerase epsilon complex (By similarity). Participates in DNA repair and in chromosomal DNA replication (By similarity).</text>
</comment>
<comment type="subunit">
    <text evidence="2">Component of the DNA polymerase epsilon complex consisting of four subunits: the catalytic subunit POLE and the accessory subunits POLE2, POLE3 and POLE4. Interaction with POLE3 is a prerequisite for further binding with POLE and POLE2.</text>
</comment>
<comment type="subcellular location">
    <subcellularLocation>
        <location evidence="4">Nucleus</location>
    </subcellularLocation>
</comment>
<organism>
    <name type="scientific">Mus musculus</name>
    <name type="common">Mouse</name>
    <dbReference type="NCBI Taxonomy" id="10090"/>
    <lineage>
        <taxon>Eukaryota</taxon>
        <taxon>Metazoa</taxon>
        <taxon>Chordata</taxon>
        <taxon>Craniata</taxon>
        <taxon>Vertebrata</taxon>
        <taxon>Euteleostomi</taxon>
        <taxon>Mammalia</taxon>
        <taxon>Eutheria</taxon>
        <taxon>Euarchontoglires</taxon>
        <taxon>Glires</taxon>
        <taxon>Rodentia</taxon>
        <taxon>Myomorpha</taxon>
        <taxon>Muroidea</taxon>
        <taxon>Muridae</taxon>
        <taxon>Murinae</taxon>
        <taxon>Mus</taxon>
        <taxon>Mus</taxon>
    </lineage>
</organism>
<evidence type="ECO:0000250" key="1">
    <source>
        <dbReference type="UniProtKB" id="P27344"/>
    </source>
</evidence>
<evidence type="ECO:0000250" key="2">
    <source>
        <dbReference type="UniProtKB" id="Q9NR33"/>
    </source>
</evidence>
<evidence type="ECO:0000256" key="3">
    <source>
        <dbReference type="SAM" id="MobiDB-lite"/>
    </source>
</evidence>
<evidence type="ECO:0000305" key="4"/>
<protein>
    <recommendedName>
        <fullName>DNA polymerase epsilon subunit 4</fullName>
    </recommendedName>
    <alternativeName>
        <fullName>DNA polymerase II subunit 4</fullName>
    </alternativeName>
    <alternativeName>
        <fullName>DNA polymerase epsilon subunit p12</fullName>
    </alternativeName>
</protein>
<keyword id="KW-0007">Acetylation</keyword>
<keyword id="KW-0238">DNA-binding</keyword>
<keyword id="KW-0539">Nucleus</keyword>
<keyword id="KW-0597">Phosphoprotein</keyword>
<keyword id="KW-1185">Reference proteome</keyword>
<name>DPOE4_MOUSE</name>
<sequence>MAAAAAAGSGTPREEEAPGGEAAASQAQAPTSAPGGVRLSRLPLARVKALVKADPDVTLAGQEAIFILARAAELFVETIAKDAYCCAQQGKRKTLQRRDLDNAIEAVDEFAFLEGTLD</sequence>
<accession>Q9CQ36</accession>
<accession>Q3TJ13</accession>
<reference key="1">
    <citation type="journal article" date="2005" name="Science">
        <title>The transcriptional landscape of the mammalian genome.</title>
        <authorList>
            <person name="Carninci P."/>
            <person name="Kasukawa T."/>
            <person name="Katayama S."/>
            <person name="Gough J."/>
            <person name="Frith M.C."/>
            <person name="Maeda N."/>
            <person name="Oyama R."/>
            <person name="Ravasi T."/>
            <person name="Lenhard B."/>
            <person name="Wells C."/>
            <person name="Kodzius R."/>
            <person name="Shimokawa K."/>
            <person name="Bajic V.B."/>
            <person name="Brenner S.E."/>
            <person name="Batalov S."/>
            <person name="Forrest A.R."/>
            <person name="Zavolan M."/>
            <person name="Davis M.J."/>
            <person name="Wilming L.G."/>
            <person name="Aidinis V."/>
            <person name="Allen J.E."/>
            <person name="Ambesi-Impiombato A."/>
            <person name="Apweiler R."/>
            <person name="Aturaliya R.N."/>
            <person name="Bailey T.L."/>
            <person name="Bansal M."/>
            <person name="Baxter L."/>
            <person name="Beisel K.W."/>
            <person name="Bersano T."/>
            <person name="Bono H."/>
            <person name="Chalk A.M."/>
            <person name="Chiu K.P."/>
            <person name="Choudhary V."/>
            <person name="Christoffels A."/>
            <person name="Clutterbuck D.R."/>
            <person name="Crowe M.L."/>
            <person name="Dalla E."/>
            <person name="Dalrymple B.P."/>
            <person name="de Bono B."/>
            <person name="Della Gatta G."/>
            <person name="di Bernardo D."/>
            <person name="Down T."/>
            <person name="Engstrom P."/>
            <person name="Fagiolini M."/>
            <person name="Faulkner G."/>
            <person name="Fletcher C.F."/>
            <person name="Fukushima T."/>
            <person name="Furuno M."/>
            <person name="Futaki S."/>
            <person name="Gariboldi M."/>
            <person name="Georgii-Hemming P."/>
            <person name="Gingeras T.R."/>
            <person name="Gojobori T."/>
            <person name="Green R.E."/>
            <person name="Gustincich S."/>
            <person name="Harbers M."/>
            <person name="Hayashi Y."/>
            <person name="Hensch T.K."/>
            <person name="Hirokawa N."/>
            <person name="Hill D."/>
            <person name="Huminiecki L."/>
            <person name="Iacono M."/>
            <person name="Ikeo K."/>
            <person name="Iwama A."/>
            <person name="Ishikawa T."/>
            <person name="Jakt M."/>
            <person name="Kanapin A."/>
            <person name="Katoh M."/>
            <person name="Kawasawa Y."/>
            <person name="Kelso J."/>
            <person name="Kitamura H."/>
            <person name="Kitano H."/>
            <person name="Kollias G."/>
            <person name="Krishnan S.P."/>
            <person name="Kruger A."/>
            <person name="Kummerfeld S.K."/>
            <person name="Kurochkin I.V."/>
            <person name="Lareau L.F."/>
            <person name="Lazarevic D."/>
            <person name="Lipovich L."/>
            <person name="Liu J."/>
            <person name="Liuni S."/>
            <person name="McWilliam S."/>
            <person name="Madan Babu M."/>
            <person name="Madera M."/>
            <person name="Marchionni L."/>
            <person name="Matsuda H."/>
            <person name="Matsuzawa S."/>
            <person name="Miki H."/>
            <person name="Mignone F."/>
            <person name="Miyake S."/>
            <person name="Morris K."/>
            <person name="Mottagui-Tabar S."/>
            <person name="Mulder N."/>
            <person name="Nakano N."/>
            <person name="Nakauchi H."/>
            <person name="Ng P."/>
            <person name="Nilsson R."/>
            <person name="Nishiguchi S."/>
            <person name="Nishikawa S."/>
            <person name="Nori F."/>
            <person name="Ohara O."/>
            <person name="Okazaki Y."/>
            <person name="Orlando V."/>
            <person name="Pang K.C."/>
            <person name="Pavan W.J."/>
            <person name="Pavesi G."/>
            <person name="Pesole G."/>
            <person name="Petrovsky N."/>
            <person name="Piazza S."/>
            <person name="Reed J."/>
            <person name="Reid J.F."/>
            <person name="Ring B.Z."/>
            <person name="Ringwald M."/>
            <person name="Rost B."/>
            <person name="Ruan Y."/>
            <person name="Salzberg S.L."/>
            <person name="Sandelin A."/>
            <person name="Schneider C."/>
            <person name="Schoenbach C."/>
            <person name="Sekiguchi K."/>
            <person name="Semple C.A."/>
            <person name="Seno S."/>
            <person name="Sessa L."/>
            <person name="Sheng Y."/>
            <person name="Shibata Y."/>
            <person name="Shimada H."/>
            <person name="Shimada K."/>
            <person name="Silva D."/>
            <person name="Sinclair B."/>
            <person name="Sperling S."/>
            <person name="Stupka E."/>
            <person name="Sugiura K."/>
            <person name="Sultana R."/>
            <person name="Takenaka Y."/>
            <person name="Taki K."/>
            <person name="Tammoja K."/>
            <person name="Tan S.L."/>
            <person name="Tang S."/>
            <person name="Taylor M.S."/>
            <person name="Tegner J."/>
            <person name="Teichmann S.A."/>
            <person name="Ueda H.R."/>
            <person name="van Nimwegen E."/>
            <person name="Verardo R."/>
            <person name="Wei C.L."/>
            <person name="Yagi K."/>
            <person name="Yamanishi H."/>
            <person name="Zabarovsky E."/>
            <person name="Zhu S."/>
            <person name="Zimmer A."/>
            <person name="Hide W."/>
            <person name="Bult C."/>
            <person name="Grimmond S.M."/>
            <person name="Teasdale R.D."/>
            <person name="Liu E.T."/>
            <person name="Brusic V."/>
            <person name="Quackenbush J."/>
            <person name="Wahlestedt C."/>
            <person name="Mattick J.S."/>
            <person name="Hume D.A."/>
            <person name="Kai C."/>
            <person name="Sasaki D."/>
            <person name="Tomaru Y."/>
            <person name="Fukuda S."/>
            <person name="Kanamori-Katayama M."/>
            <person name="Suzuki M."/>
            <person name="Aoki J."/>
            <person name="Arakawa T."/>
            <person name="Iida J."/>
            <person name="Imamura K."/>
            <person name="Itoh M."/>
            <person name="Kato T."/>
            <person name="Kawaji H."/>
            <person name="Kawagashira N."/>
            <person name="Kawashima T."/>
            <person name="Kojima M."/>
            <person name="Kondo S."/>
            <person name="Konno H."/>
            <person name="Nakano K."/>
            <person name="Ninomiya N."/>
            <person name="Nishio T."/>
            <person name="Okada M."/>
            <person name="Plessy C."/>
            <person name="Shibata K."/>
            <person name="Shiraki T."/>
            <person name="Suzuki S."/>
            <person name="Tagami M."/>
            <person name="Waki K."/>
            <person name="Watahiki A."/>
            <person name="Okamura-Oho Y."/>
            <person name="Suzuki H."/>
            <person name="Kawai J."/>
            <person name="Hayashizaki Y."/>
        </authorList>
    </citation>
    <scope>NUCLEOTIDE SEQUENCE [LARGE SCALE MRNA]</scope>
    <source>
        <strain>C57BL/6J</strain>
        <tissue>Placenta</tissue>
    </source>
</reference>
<reference key="2">
    <citation type="journal article" date="2004" name="Genome Res.">
        <title>The status, quality, and expansion of the NIH full-length cDNA project: the Mammalian Gene Collection (MGC).</title>
        <authorList>
            <consortium name="The MGC Project Team"/>
        </authorList>
    </citation>
    <scope>NUCLEOTIDE SEQUENCE [LARGE SCALE MRNA]</scope>
</reference>
<reference key="3">
    <citation type="journal article" date="2010" name="Cell">
        <title>A tissue-specific atlas of mouse protein phosphorylation and expression.</title>
        <authorList>
            <person name="Huttlin E.L."/>
            <person name="Jedrychowski M.P."/>
            <person name="Elias J.E."/>
            <person name="Goswami T."/>
            <person name="Rad R."/>
            <person name="Beausoleil S.A."/>
            <person name="Villen J."/>
            <person name="Haas W."/>
            <person name="Sowa M.E."/>
            <person name="Gygi S.P."/>
        </authorList>
    </citation>
    <scope>IDENTIFICATION BY MASS SPECTROMETRY [LARGE SCALE ANALYSIS]</scope>
    <source>
        <tissue>Liver</tissue>
        <tissue>Spleen</tissue>
        <tissue>Testis</tissue>
    </source>
</reference>